<name>NU3C_MAIZE</name>
<accession>P19044</accession>
<keyword id="KW-0150">Chloroplast</keyword>
<keyword id="KW-0472">Membrane</keyword>
<keyword id="KW-0520">NAD</keyword>
<keyword id="KW-0521">NADP</keyword>
<keyword id="KW-0934">Plastid</keyword>
<keyword id="KW-0618">Plastoquinone</keyword>
<keyword id="KW-0874">Quinone</keyword>
<keyword id="KW-1185">Reference proteome</keyword>
<keyword id="KW-0793">Thylakoid</keyword>
<keyword id="KW-1278">Translocase</keyword>
<keyword id="KW-0812">Transmembrane</keyword>
<keyword id="KW-1133">Transmembrane helix</keyword>
<keyword id="KW-0813">Transport</keyword>
<geneLocation type="chloroplast"/>
<feature type="chain" id="PRO_0000117847" description="NAD(P)H-quinone oxidoreductase subunit 3, chloroplastic">
    <location>
        <begin position="1"/>
        <end position="120"/>
    </location>
</feature>
<feature type="transmembrane region" description="Helical" evidence="1">
    <location>
        <begin position="9"/>
        <end position="29"/>
    </location>
</feature>
<feature type="transmembrane region" description="Helical" evidence="1">
    <location>
        <begin position="64"/>
        <end position="84"/>
    </location>
</feature>
<feature type="transmembrane region" description="Helical" evidence="1">
    <location>
        <begin position="88"/>
        <end position="108"/>
    </location>
</feature>
<sequence>MFLLHEYDIFWTFLIIASLIPILVFWISGLLAPVSEGPEKLSSYESGIEPMGGAWLQFRIRYYMFALVFVVFDVETVFLYPWAMSFDVLGVSVFIEAFIFVLILVVGLVYAWRKGALEWS</sequence>
<evidence type="ECO:0000255" key="1">
    <source>
        <dbReference type="HAMAP-Rule" id="MF_01394"/>
    </source>
</evidence>
<protein>
    <recommendedName>
        <fullName evidence="1">NAD(P)H-quinone oxidoreductase subunit 3, chloroplastic</fullName>
        <ecNumber evidence="1">7.1.1.-</ecNumber>
    </recommendedName>
    <alternativeName>
        <fullName evidence="1">NAD(P)H dehydrogenase subunit 3</fullName>
    </alternativeName>
    <alternativeName>
        <fullName evidence="1">NADH-plastoquinone oxidoreductase subunit 3</fullName>
    </alternativeName>
</protein>
<reference key="1">
    <citation type="journal article" date="1989" name="Mol. Gen. Genet.">
        <title>Characterization of the ndhC-psbG-ORF157/159 operon of maize plastid DNA and of the cyanobacterium Synechocystis sp. PCC6803.</title>
        <authorList>
            <person name="Steinmueller K."/>
            <person name="Ley A.C."/>
            <person name="Steinmetz A.A."/>
            <person name="Sayre R.T."/>
            <person name="Bogorad L."/>
        </authorList>
    </citation>
    <scope>NUCLEOTIDE SEQUENCE [LARGE SCALE GENOMIC DNA]</scope>
    <source>
        <strain>cv. B73</strain>
    </source>
</reference>
<reference key="2">
    <citation type="journal article" date="1995" name="J. Mol. Biol.">
        <title>Complete sequence of the maize chloroplast genome: gene content, hotspots of divergence and fine tuning of genetic information by transcript editing.</title>
        <authorList>
            <person name="Maier R.M."/>
            <person name="Neckermann K."/>
            <person name="Igloi G.L."/>
            <person name="Koessel H."/>
        </authorList>
    </citation>
    <scope>NUCLEOTIDE SEQUENCE [LARGE SCALE GENOMIC DNA]</scope>
    <source>
        <strain>cv. B73</strain>
    </source>
</reference>
<gene>
    <name evidence="1" type="primary">ndhC</name>
    <name type="synonym">ndh3</name>
</gene>
<proteinExistence type="inferred from homology"/>
<organism>
    <name type="scientific">Zea mays</name>
    <name type="common">Maize</name>
    <dbReference type="NCBI Taxonomy" id="4577"/>
    <lineage>
        <taxon>Eukaryota</taxon>
        <taxon>Viridiplantae</taxon>
        <taxon>Streptophyta</taxon>
        <taxon>Embryophyta</taxon>
        <taxon>Tracheophyta</taxon>
        <taxon>Spermatophyta</taxon>
        <taxon>Magnoliopsida</taxon>
        <taxon>Liliopsida</taxon>
        <taxon>Poales</taxon>
        <taxon>Poaceae</taxon>
        <taxon>PACMAD clade</taxon>
        <taxon>Panicoideae</taxon>
        <taxon>Andropogonodae</taxon>
        <taxon>Andropogoneae</taxon>
        <taxon>Tripsacinae</taxon>
        <taxon>Zea</taxon>
    </lineage>
</organism>
<dbReference type="EC" id="7.1.1.-" evidence="1"/>
<dbReference type="EMBL" id="X17438">
    <property type="protein sequence ID" value="CAA35481.1"/>
    <property type="molecule type" value="Genomic_DNA"/>
</dbReference>
<dbReference type="EMBL" id="X86563">
    <property type="protein sequence ID" value="CAA60291.1"/>
    <property type="molecule type" value="Genomic_DNA"/>
</dbReference>
<dbReference type="PIR" id="S58557">
    <property type="entry name" value="S58557"/>
</dbReference>
<dbReference type="RefSeq" id="NP_043030.1">
    <property type="nucleotide sequence ID" value="NC_001666.2"/>
</dbReference>
<dbReference type="SMR" id="P19044"/>
<dbReference type="FunCoup" id="P19044">
    <property type="interactions" value="44"/>
</dbReference>
<dbReference type="STRING" id="4577.P19044"/>
<dbReference type="GeneID" id="845182"/>
<dbReference type="KEGG" id="zma:845182"/>
<dbReference type="MaizeGDB" id="69246"/>
<dbReference type="InParanoid" id="P19044"/>
<dbReference type="OrthoDB" id="1852333at2759"/>
<dbReference type="Proteomes" id="UP000007305">
    <property type="component" value="Chloroplast"/>
</dbReference>
<dbReference type="GO" id="GO:0009535">
    <property type="term" value="C:chloroplast thylakoid membrane"/>
    <property type="evidence" value="ECO:0007669"/>
    <property type="project" value="UniProtKB-SubCell"/>
</dbReference>
<dbReference type="GO" id="GO:0030964">
    <property type="term" value="C:NADH dehydrogenase complex"/>
    <property type="evidence" value="ECO:0000318"/>
    <property type="project" value="GO_Central"/>
</dbReference>
<dbReference type="GO" id="GO:0008137">
    <property type="term" value="F:NADH dehydrogenase (ubiquinone) activity"/>
    <property type="evidence" value="ECO:0000318"/>
    <property type="project" value="GO_Central"/>
</dbReference>
<dbReference type="GO" id="GO:0048038">
    <property type="term" value="F:quinone binding"/>
    <property type="evidence" value="ECO:0007669"/>
    <property type="project" value="UniProtKB-KW"/>
</dbReference>
<dbReference type="GO" id="GO:0019684">
    <property type="term" value="P:photosynthesis, light reaction"/>
    <property type="evidence" value="ECO:0007669"/>
    <property type="project" value="UniProtKB-UniRule"/>
</dbReference>
<dbReference type="FunFam" id="1.20.58.1610:FF:000001">
    <property type="entry name" value="NAD(P)H-quinone oxidoreductase subunit 3, chloroplastic"/>
    <property type="match status" value="1"/>
</dbReference>
<dbReference type="Gene3D" id="1.20.58.1610">
    <property type="entry name" value="NADH:ubiquinone/plastoquinone oxidoreductase, chain 3"/>
    <property type="match status" value="1"/>
</dbReference>
<dbReference type="HAMAP" id="MF_01394">
    <property type="entry name" value="NDH1_NuoA"/>
    <property type="match status" value="1"/>
</dbReference>
<dbReference type="InterPro" id="IPR023043">
    <property type="entry name" value="NAD(P)H_OxRDtase_bac/plastid"/>
</dbReference>
<dbReference type="InterPro" id="IPR000440">
    <property type="entry name" value="NADH_UbQ/plastoQ_OxRdtase_su3"/>
</dbReference>
<dbReference type="InterPro" id="IPR038430">
    <property type="entry name" value="NDAH_ubi_oxred_su3_sf"/>
</dbReference>
<dbReference type="PANTHER" id="PTHR11058">
    <property type="entry name" value="NADH-UBIQUINONE OXIDOREDUCTASE CHAIN 3"/>
    <property type="match status" value="1"/>
</dbReference>
<dbReference type="PANTHER" id="PTHR11058:SF9">
    <property type="entry name" value="NADH-UBIQUINONE OXIDOREDUCTASE CHAIN 3"/>
    <property type="match status" value="1"/>
</dbReference>
<dbReference type="Pfam" id="PF00507">
    <property type="entry name" value="Oxidored_q4"/>
    <property type="match status" value="1"/>
</dbReference>
<comment type="function">
    <text evidence="1">NDH shuttles electrons from NAD(P)H:plastoquinone, via FMN and iron-sulfur (Fe-S) centers, to quinones in the photosynthetic chain and possibly in a chloroplast respiratory chain. The immediate electron acceptor for the enzyme in this species is believed to be plastoquinone. Couples the redox reaction to proton translocation, and thus conserves the redox energy in a proton gradient.</text>
</comment>
<comment type="catalytic activity">
    <reaction evidence="1">
        <text>a plastoquinone + NADH + (n+1) H(+)(in) = a plastoquinol + NAD(+) + n H(+)(out)</text>
        <dbReference type="Rhea" id="RHEA:42608"/>
        <dbReference type="Rhea" id="RHEA-COMP:9561"/>
        <dbReference type="Rhea" id="RHEA-COMP:9562"/>
        <dbReference type="ChEBI" id="CHEBI:15378"/>
        <dbReference type="ChEBI" id="CHEBI:17757"/>
        <dbReference type="ChEBI" id="CHEBI:57540"/>
        <dbReference type="ChEBI" id="CHEBI:57945"/>
        <dbReference type="ChEBI" id="CHEBI:62192"/>
    </reaction>
</comment>
<comment type="catalytic activity">
    <reaction evidence="1">
        <text>a plastoquinone + NADPH + (n+1) H(+)(in) = a plastoquinol + NADP(+) + n H(+)(out)</text>
        <dbReference type="Rhea" id="RHEA:42612"/>
        <dbReference type="Rhea" id="RHEA-COMP:9561"/>
        <dbReference type="Rhea" id="RHEA-COMP:9562"/>
        <dbReference type="ChEBI" id="CHEBI:15378"/>
        <dbReference type="ChEBI" id="CHEBI:17757"/>
        <dbReference type="ChEBI" id="CHEBI:57783"/>
        <dbReference type="ChEBI" id="CHEBI:58349"/>
        <dbReference type="ChEBI" id="CHEBI:62192"/>
    </reaction>
</comment>
<comment type="subunit">
    <text evidence="1">NDH is composed of at least 16 different subunits, 5 of which are encoded in the nucleus.</text>
</comment>
<comment type="subcellular location">
    <subcellularLocation>
        <location evidence="1">Plastid</location>
        <location evidence="1">Chloroplast thylakoid membrane</location>
        <topology evidence="1">Multi-pass membrane protein</topology>
    </subcellularLocation>
</comment>
<comment type="similarity">
    <text evidence="1">Belongs to the complex I subunit 3 family.</text>
</comment>